<name>KPYK_BUCAI</name>
<protein>
    <recommendedName>
        <fullName>Pyruvate kinase</fullName>
        <shortName>PK</shortName>
        <ecNumber>2.7.1.40</ecNumber>
    </recommendedName>
</protein>
<accession>P57404</accession>
<feature type="chain" id="PRO_0000112058" description="Pyruvate kinase">
    <location>
        <begin position="1"/>
        <end position="480"/>
    </location>
</feature>
<feature type="binding site" evidence="1">
    <location>
        <position position="36"/>
    </location>
    <ligand>
        <name>substrate</name>
    </ligand>
</feature>
<feature type="binding site" evidence="2">
    <location>
        <begin position="38"/>
        <end position="41"/>
    </location>
    <ligand>
        <name>ATP</name>
        <dbReference type="ChEBI" id="CHEBI:30616"/>
    </ligand>
</feature>
<feature type="binding site" evidence="1">
    <location>
        <position position="38"/>
    </location>
    <ligand>
        <name>K(+)</name>
        <dbReference type="ChEBI" id="CHEBI:29103"/>
    </ligand>
</feature>
<feature type="binding site" evidence="1">
    <location>
        <position position="40"/>
    </location>
    <ligand>
        <name>K(+)</name>
        <dbReference type="ChEBI" id="CHEBI:29103"/>
    </ligand>
</feature>
<feature type="binding site" evidence="1">
    <location>
        <position position="70"/>
    </location>
    <ligand>
        <name>K(+)</name>
        <dbReference type="ChEBI" id="CHEBI:29103"/>
    </ligand>
</feature>
<feature type="binding site" evidence="2">
    <location>
        <position position="77"/>
    </location>
    <ligand>
        <name>ATP</name>
        <dbReference type="ChEBI" id="CHEBI:30616"/>
    </ligand>
</feature>
<feature type="binding site" evidence="2">
    <location>
        <position position="160"/>
    </location>
    <ligand>
        <name>ATP</name>
        <dbReference type="ChEBI" id="CHEBI:30616"/>
    </ligand>
</feature>
<feature type="binding site" evidence="1">
    <location>
        <position position="225"/>
    </location>
    <ligand>
        <name>Mg(2+)</name>
        <dbReference type="ChEBI" id="CHEBI:18420"/>
    </ligand>
</feature>
<feature type="binding site" evidence="1">
    <location>
        <position position="251"/>
    </location>
    <ligand>
        <name>substrate</name>
    </ligand>
</feature>
<feature type="binding site" evidence="1">
    <location>
        <position position="252"/>
    </location>
    <ligand>
        <name>Mg(2+)</name>
        <dbReference type="ChEBI" id="CHEBI:18420"/>
    </ligand>
</feature>
<feature type="binding site" evidence="1">
    <location>
        <position position="252"/>
    </location>
    <ligand>
        <name>substrate</name>
    </ligand>
</feature>
<feature type="binding site" evidence="1">
    <location>
        <position position="284"/>
    </location>
    <ligand>
        <name>substrate</name>
    </ligand>
</feature>
<feature type="site" description="Transition state stabilizer" evidence="1">
    <location>
        <position position="223"/>
    </location>
</feature>
<reference key="1">
    <citation type="journal article" date="2000" name="Nature">
        <title>Genome sequence of the endocellular bacterial symbiont of aphids Buchnera sp. APS.</title>
        <authorList>
            <person name="Shigenobu S."/>
            <person name="Watanabe H."/>
            <person name="Hattori M."/>
            <person name="Sakaki Y."/>
            <person name="Ishikawa H."/>
        </authorList>
    </citation>
    <scope>NUCLEOTIDE SEQUENCE [LARGE SCALE GENOMIC DNA]</scope>
    <source>
        <strain>APS</strain>
    </source>
</reference>
<dbReference type="EC" id="2.7.1.40"/>
<dbReference type="EMBL" id="BA000003">
    <property type="protein sequence ID" value="BAB13027.1"/>
    <property type="molecule type" value="Genomic_DNA"/>
</dbReference>
<dbReference type="RefSeq" id="NP_240141.1">
    <property type="nucleotide sequence ID" value="NC_002528.1"/>
</dbReference>
<dbReference type="RefSeq" id="WP_010896064.1">
    <property type="nucleotide sequence ID" value="NC_002528.1"/>
</dbReference>
<dbReference type="SMR" id="P57404"/>
<dbReference type="STRING" id="563178.BUAP5A_312"/>
<dbReference type="EnsemblBacteria" id="BAB13027">
    <property type="protein sequence ID" value="BAB13027"/>
    <property type="gene ID" value="BAB13027"/>
</dbReference>
<dbReference type="KEGG" id="buc:BU319"/>
<dbReference type="PATRIC" id="fig|107806.10.peg.331"/>
<dbReference type="eggNOG" id="COG0469">
    <property type="taxonomic scope" value="Bacteria"/>
</dbReference>
<dbReference type="HOGENOM" id="CLU_015439_0_2_6"/>
<dbReference type="UniPathway" id="UPA00109">
    <property type="reaction ID" value="UER00188"/>
</dbReference>
<dbReference type="Proteomes" id="UP000001806">
    <property type="component" value="Chromosome"/>
</dbReference>
<dbReference type="GO" id="GO:0005524">
    <property type="term" value="F:ATP binding"/>
    <property type="evidence" value="ECO:0007669"/>
    <property type="project" value="UniProtKB-KW"/>
</dbReference>
<dbReference type="GO" id="GO:0016301">
    <property type="term" value="F:kinase activity"/>
    <property type="evidence" value="ECO:0007669"/>
    <property type="project" value="UniProtKB-KW"/>
</dbReference>
<dbReference type="GO" id="GO:0000287">
    <property type="term" value="F:magnesium ion binding"/>
    <property type="evidence" value="ECO:0007669"/>
    <property type="project" value="InterPro"/>
</dbReference>
<dbReference type="GO" id="GO:0030955">
    <property type="term" value="F:potassium ion binding"/>
    <property type="evidence" value="ECO:0007669"/>
    <property type="project" value="InterPro"/>
</dbReference>
<dbReference type="GO" id="GO:0004743">
    <property type="term" value="F:pyruvate kinase activity"/>
    <property type="evidence" value="ECO:0007669"/>
    <property type="project" value="UniProtKB-EC"/>
</dbReference>
<dbReference type="FunFam" id="2.40.33.10:FF:000002">
    <property type="entry name" value="Pyruvate kinase"/>
    <property type="match status" value="1"/>
</dbReference>
<dbReference type="FunFam" id="3.40.1380.20:FF:000004">
    <property type="entry name" value="Pyruvate kinase"/>
    <property type="match status" value="1"/>
</dbReference>
<dbReference type="Gene3D" id="3.20.20.60">
    <property type="entry name" value="Phosphoenolpyruvate-binding domains"/>
    <property type="match status" value="1"/>
</dbReference>
<dbReference type="Gene3D" id="2.40.33.10">
    <property type="entry name" value="PK beta-barrel domain-like"/>
    <property type="match status" value="1"/>
</dbReference>
<dbReference type="Gene3D" id="3.40.1380.20">
    <property type="entry name" value="Pyruvate kinase, C-terminal domain"/>
    <property type="match status" value="1"/>
</dbReference>
<dbReference type="InterPro" id="IPR001697">
    <property type="entry name" value="Pyr_Knase"/>
</dbReference>
<dbReference type="InterPro" id="IPR015813">
    <property type="entry name" value="Pyrv/PenolPyrv_kinase-like_dom"/>
</dbReference>
<dbReference type="InterPro" id="IPR040442">
    <property type="entry name" value="Pyrv_kinase-like_dom_sf"/>
</dbReference>
<dbReference type="InterPro" id="IPR011037">
    <property type="entry name" value="Pyrv_Knase-like_insert_dom_sf"/>
</dbReference>
<dbReference type="InterPro" id="IPR018209">
    <property type="entry name" value="Pyrv_Knase_AS"/>
</dbReference>
<dbReference type="InterPro" id="IPR015793">
    <property type="entry name" value="Pyrv_Knase_brl"/>
</dbReference>
<dbReference type="InterPro" id="IPR015795">
    <property type="entry name" value="Pyrv_Knase_C"/>
</dbReference>
<dbReference type="InterPro" id="IPR036918">
    <property type="entry name" value="Pyrv_Knase_C_sf"/>
</dbReference>
<dbReference type="InterPro" id="IPR015806">
    <property type="entry name" value="Pyrv_Knase_insert_dom_sf"/>
</dbReference>
<dbReference type="NCBIfam" id="NF004491">
    <property type="entry name" value="PRK05826.1"/>
    <property type="match status" value="1"/>
</dbReference>
<dbReference type="NCBIfam" id="TIGR01064">
    <property type="entry name" value="pyruv_kin"/>
    <property type="match status" value="1"/>
</dbReference>
<dbReference type="PANTHER" id="PTHR11817">
    <property type="entry name" value="PYRUVATE KINASE"/>
    <property type="match status" value="1"/>
</dbReference>
<dbReference type="Pfam" id="PF00224">
    <property type="entry name" value="PK"/>
    <property type="match status" value="1"/>
</dbReference>
<dbReference type="Pfam" id="PF02887">
    <property type="entry name" value="PK_C"/>
    <property type="match status" value="1"/>
</dbReference>
<dbReference type="PRINTS" id="PR01050">
    <property type="entry name" value="PYRUVTKNASE"/>
</dbReference>
<dbReference type="SUPFAM" id="SSF51621">
    <property type="entry name" value="Phosphoenolpyruvate/pyruvate domain"/>
    <property type="match status" value="1"/>
</dbReference>
<dbReference type="SUPFAM" id="SSF50800">
    <property type="entry name" value="PK beta-barrel domain-like"/>
    <property type="match status" value="1"/>
</dbReference>
<dbReference type="SUPFAM" id="SSF52935">
    <property type="entry name" value="PK C-terminal domain-like"/>
    <property type="match status" value="1"/>
</dbReference>
<dbReference type="PROSITE" id="PS00110">
    <property type="entry name" value="PYRUVATE_KINASE"/>
    <property type="match status" value="1"/>
</dbReference>
<organism>
    <name type="scientific">Buchnera aphidicola subsp. Acyrthosiphon pisum (strain APS)</name>
    <name type="common">Acyrthosiphon pisum symbiotic bacterium</name>
    <dbReference type="NCBI Taxonomy" id="107806"/>
    <lineage>
        <taxon>Bacteria</taxon>
        <taxon>Pseudomonadati</taxon>
        <taxon>Pseudomonadota</taxon>
        <taxon>Gammaproteobacteria</taxon>
        <taxon>Enterobacterales</taxon>
        <taxon>Erwiniaceae</taxon>
        <taxon>Buchnera</taxon>
    </lineage>
</organism>
<comment type="catalytic activity">
    <reaction>
        <text>pyruvate + ATP = phosphoenolpyruvate + ADP + H(+)</text>
        <dbReference type="Rhea" id="RHEA:18157"/>
        <dbReference type="ChEBI" id="CHEBI:15361"/>
        <dbReference type="ChEBI" id="CHEBI:15378"/>
        <dbReference type="ChEBI" id="CHEBI:30616"/>
        <dbReference type="ChEBI" id="CHEBI:58702"/>
        <dbReference type="ChEBI" id="CHEBI:456216"/>
        <dbReference type="EC" id="2.7.1.40"/>
    </reaction>
</comment>
<comment type="cofactor">
    <cofactor evidence="1">
        <name>Mg(2+)</name>
        <dbReference type="ChEBI" id="CHEBI:18420"/>
    </cofactor>
</comment>
<comment type="cofactor">
    <cofactor evidence="1">
        <name>K(+)</name>
        <dbReference type="ChEBI" id="CHEBI:29103"/>
    </cofactor>
</comment>
<comment type="activity regulation">
    <text evidence="1">Allosterically activated by AMP and by several sugar phosphates. Belongs to type II PK (By similarity).</text>
</comment>
<comment type="pathway">
    <text>Carbohydrate degradation; glycolysis; pyruvate from D-glyceraldehyde 3-phosphate: step 5/5.</text>
</comment>
<comment type="subunit">
    <text evidence="1">Homotetramer.</text>
</comment>
<comment type="similarity">
    <text evidence="3">Belongs to the pyruvate kinase family.</text>
</comment>
<proteinExistence type="inferred from homology"/>
<keyword id="KW-0021">Allosteric enzyme</keyword>
<keyword id="KW-0067">ATP-binding</keyword>
<keyword id="KW-0324">Glycolysis</keyword>
<keyword id="KW-0418">Kinase</keyword>
<keyword id="KW-0460">Magnesium</keyword>
<keyword id="KW-0479">Metal-binding</keyword>
<keyword id="KW-0547">Nucleotide-binding</keyword>
<keyword id="KW-0630">Potassium</keyword>
<keyword id="KW-0670">Pyruvate</keyword>
<keyword id="KW-1185">Reference proteome</keyword>
<keyword id="KW-0808">Transferase</keyword>
<sequence>MLNRLRRTKIVATLGPSTDINNNLEKIIRSGVNVLRFNFSHGSKDEHKSRANQAREIMTRLNFHIALLGDLQGPKIRISKFIKNNIFLNVGDFFILDANLDQNNGNQERVGIDYKQLPYDLKVGDVLLLDDGRIQLKVIKSTGHEILTKVVIGGILSNNKGINKLGGGLSADALTEKDKKDIILATEINVDYLAISFPRCSNDLKQARKLAKEFGSNAKIIAKIERAEAVLNQNTIEDIILASDAIMIARGDLGVEIGDSELAGIQKKLIRTARQLNRIVITATQMMESMITNPLPTRAEVMDVANAVLDGSDAVMLSAETASGEYPAETVIKMAKICKGAEKVPSINVSRHRIHAKFDDIEEAIAMSAMYVANHLKGITAIITMTESGKTALMTSRITSGLPIFALSKNKETLNLASLYRGVTPIYFNSKNNNFKAANEAIVLLRKRGFLCRGELVIITQGDIMGKIGKTNTSRILKVV</sequence>
<gene>
    <name type="primary">pykA</name>
    <name type="ordered locus">BU319</name>
</gene>
<evidence type="ECO:0000250" key="1"/>
<evidence type="ECO:0000250" key="2">
    <source>
        <dbReference type="UniProtKB" id="P14618"/>
    </source>
</evidence>
<evidence type="ECO:0000305" key="3"/>